<reference key="1">
    <citation type="journal article" date="1993" name="PCR Methods Appl.">
        <title>PCR amplification of SRY-related gene sequences reveals evolutionary conservation of the SRY-box motif.</title>
        <authorList>
            <person name="Coriat A.M."/>
            <person name="Mueller U."/>
            <person name="Harry J.L."/>
            <person name="Uwanogho D."/>
            <person name="Sharpe P.T."/>
        </authorList>
    </citation>
    <scope>NUCLEOTIDE SEQUENCE [GENOMIC DNA]</scope>
    <source>
        <tissue>Blood</tissue>
    </source>
</reference>
<feature type="chain" id="PRO_0000048783" description="SRY-related protein CH7">
    <location>
        <begin position="1" status="less than"/>
        <end position="54" status="greater than"/>
    </location>
</feature>
<feature type="DNA-binding region" description="HMG box" evidence="1">
    <location>
        <begin position="1" status="less than"/>
        <end position="54" status="greater than"/>
    </location>
</feature>
<feature type="non-terminal residue">
    <location>
        <position position="1"/>
    </location>
</feature>
<feature type="non-terminal residue">
    <location>
        <position position="54"/>
    </location>
</feature>
<keyword id="KW-0238">DNA-binding</keyword>
<keyword id="KW-0539">Nucleus</keyword>
<keyword id="KW-1185">Reference proteome</keyword>
<proteinExistence type="inferred from homology"/>
<accession>P40669</accession>
<protein>
    <recommendedName>
        <fullName>SRY-related protein CH7</fullName>
    </recommendedName>
</protein>
<dbReference type="EMBL" id="M86327">
    <property type="protein sequence ID" value="AAA48684.1"/>
    <property type="molecule type" value="Genomic_DNA"/>
</dbReference>
<dbReference type="PIR" id="I50197">
    <property type="entry name" value="I50197"/>
</dbReference>
<dbReference type="SMR" id="P40669"/>
<dbReference type="FunCoup" id="P40669">
    <property type="interactions" value="6"/>
</dbReference>
<dbReference type="InParanoid" id="P40669"/>
<dbReference type="Proteomes" id="UP000000539">
    <property type="component" value="Unassembled WGS sequence"/>
</dbReference>
<dbReference type="GO" id="GO:0005634">
    <property type="term" value="C:nucleus"/>
    <property type="evidence" value="ECO:0007669"/>
    <property type="project" value="UniProtKB-SubCell"/>
</dbReference>
<dbReference type="GO" id="GO:0003677">
    <property type="term" value="F:DNA binding"/>
    <property type="evidence" value="ECO:0007669"/>
    <property type="project" value="UniProtKB-KW"/>
</dbReference>
<dbReference type="Gene3D" id="1.10.30.10">
    <property type="entry name" value="High mobility group box domain"/>
    <property type="match status" value="1"/>
</dbReference>
<dbReference type="InterPro" id="IPR009071">
    <property type="entry name" value="HMG_box_dom"/>
</dbReference>
<dbReference type="InterPro" id="IPR036910">
    <property type="entry name" value="HMG_box_dom_sf"/>
</dbReference>
<dbReference type="InterPro" id="IPR050140">
    <property type="entry name" value="SRY-related_HMG-box_TF-like"/>
</dbReference>
<dbReference type="PANTHER" id="PTHR10270:SF324">
    <property type="entry name" value="SOX DOMAIN-CONTAINING PROTEIN DICHAETE-RELATED"/>
    <property type="match status" value="1"/>
</dbReference>
<dbReference type="PANTHER" id="PTHR10270">
    <property type="entry name" value="SOX TRANSCRIPTION FACTOR"/>
    <property type="match status" value="1"/>
</dbReference>
<dbReference type="Pfam" id="PF00505">
    <property type="entry name" value="HMG_box"/>
    <property type="match status" value="1"/>
</dbReference>
<dbReference type="SMART" id="SM00398">
    <property type="entry name" value="HMG"/>
    <property type="match status" value="1"/>
</dbReference>
<dbReference type="SUPFAM" id="SSF47095">
    <property type="entry name" value="HMG-box"/>
    <property type="match status" value="1"/>
</dbReference>
<dbReference type="PROSITE" id="PS50118">
    <property type="entry name" value="HMG_BOX_2"/>
    <property type="match status" value="1"/>
</dbReference>
<name>CH07_CHICK</name>
<organism>
    <name type="scientific">Gallus gallus</name>
    <name type="common">Chicken</name>
    <dbReference type="NCBI Taxonomy" id="9031"/>
    <lineage>
        <taxon>Eukaryota</taxon>
        <taxon>Metazoa</taxon>
        <taxon>Chordata</taxon>
        <taxon>Craniata</taxon>
        <taxon>Vertebrata</taxon>
        <taxon>Euteleostomi</taxon>
        <taxon>Archelosauria</taxon>
        <taxon>Archosauria</taxon>
        <taxon>Dinosauria</taxon>
        <taxon>Saurischia</taxon>
        <taxon>Theropoda</taxon>
        <taxon>Coelurosauria</taxon>
        <taxon>Aves</taxon>
        <taxon>Neognathae</taxon>
        <taxon>Galloanserae</taxon>
        <taxon>Galliformes</taxon>
        <taxon>Phasianidae</taxon>
        <taxon>Phasianinae</taxon>
        <taxon>Gallus</taxon>
    </lineage>
</organism>
<sequence length="54" mass="6528">MALENPKMHNSESSKRLGAEWKLLSEAEKRPFIDEAKRLRAMRMKEYPDYKYRP</sequence>
<evidence type="ECO:0000255" key="1">
    <source>
        <dbReference type="PROSITE-ProRule" id="PRU00267"/>
    </source>
</evidence>
<comment type="subcellular location">
    <subcellularLocation>
        <location evidence="1">Nucleus</location>
    </subcellularLocation>
</comment>